<organism>
    <name type="scientific">Trimeresurus cantori</name>
    <name type="common">Cantor's pit viper</name>
    <name type="synonym">Cryptelytrops cantori</name>
    <dbReference type="NCBI Taxonomy" id="44711"/>
    <lineage>
        <taxon>Eukaryota</taxon>
        <taxon>Metazoa</taxon>
        <taxon>Chordata</taxon>
        <taxon>Craniata</taxon>
        <taxon>Vertebrata</taxon>
        <taxon>Euteleostomi</taxon>
        <taxon>Lepidosauria</taxon>
        <taxon>Squamata</taxon>
        <taxon>Bifurcata</taxon>
        <taxon>Unidentata</taxon>
        <taxon>Episquamata</taxon>
        <taxon>Toxicofera</taxon>
        <taxon>Serpentes</taxon>
        <taxon>Colubroidea</taxon>
        <taxon>Viperidae</taxon>
        <taxon>Crotalinae</taxon>
        <taxon>Trimeresurus</taxon>
    </lineage>
</organism>
<keyword id="KW-0249">Electron transport</keyword>
<keyword id="KW-0472">Membrane</keyword>
<keyword id="KW-0496">Mitochondrion</keyword>
<keyword id="KW-0520">NAD</keyword>
<keyword id="KW-0679">Respiratory chain</keyword>
<keyword id="KW-1278">Translocase</keyword>
<keyword id="KW-0812">Transmembrane</keyword>
<keyword id="KW-1133">Transmembrane helix</keyword>
<keyword id="KW-0813">Transport</keyword>
<keyword id="KW-0830">Ubiquinone</keyword>
<sequence length="231" mass="25667">PIAGSMVLAAILLKLGGYGIIRIMQIMPMTKTDMFLPFLVLALWGAILANLTCLQQTDLKSLIAYSSISHMGLVVAAIIIQTPWGLSGAMALMIAHGFTSSALFCLANTTYERTHTRILILTRGFHNILPMATTWWLLTNLMNIATPPTMNFTSELLIMSTLFNWCPTTIILLGMSMLITASYSLHMFLSTQMGYPLLNNQTEPTHTREHLLMILHIVPLMMISMKPELVI</sequence>
<feature type="chain" id="PRO_0000117996" description="NADH-ubiquinone oxidoreductase chain 4">
    <location>
        <begin position="1" status="less than"/>
        <end position="231" status="greater than"/>
    </location>
</feature>
<feature type="transmembrane region" description="Helical" evidence="2">
    <location>
        <begin position="1"/>
        <end position="21"/>
    </location>
</feature>
<feature type="transmembrane region" description="Helical" evidence="2">
    <location>
        <begin position="34"/>
        <end position="54"/>
    </location>
</feature>
<feature type="transmembrane region" description="Helical" evidence="2">
    <location>
        <begin position="63"/>
        <end position="85"/>
    </location>
</feature>
<feature type="transmembrane region" description="Helical" evidence="2">
    <location>
        <begin position="89"/>
        <end position="111"/>
    </location>
</feature>
<feature type="transmembrane region" description="Helical" evidence="2">
    <location>
        <begin position="118"/>
        <end position="138"/>
    </location>
</feature>
<feature type="transmembrane region" description="Helical" evidence="2">
    <location>
        <begin position="169"/>
        <end position="189"/>
    </location>
</feature>
<feature type="non-terminal residue">
    <location>
        <position position="1"/>
    </location>
</feature>
<feature type="non-terminal residue">
    <location>
        <position position="231"/>
    </location>
</feature>
<name>NU4M_TRICN</name>
<reference key="1">
    <citation type="journal article" date="1996" name="Copeia">
        <title>Crotaline intergeneric relationships based on mitochondrial DNA sequence data.</title>
        <authorList>
            <person name="Kraus F."/>
            <person name="Mink D.G."/>
            <person name="Brown W.M."/>
        </authorList>
    </citation>
    <scope>NUCLEOTIDE SEQUENCE [GENOMIC DNA]</scope>
</reference>
<protein>
    <recommendedName>
        <fullName>NADH-ubiquinone oxidoreductase chain 4</fullName>
        <ecNumber>7.1.1.2</ecNumber>
    </recommendedName>
    <alternativeName>
        <fullName>NADH dehydrogenase subunit 4</fullName>
    </alternativeName>
</protein>
<dbReference type="EC" id="7.1.1.2"/>
<dbReference type="EMBL" id="U41891">
    <property type="protein sequence ID" value="AAB46654.1"/>
    <property type="molecule type" value="Genomic_DNA"/>
</dbReference>
<dbReference type="SMR" id="O03792"/>
<dbReference type="GO" id="GO:0031966">
    <property type="term" value="C:mitochondrial membrane"/>
    <property type="evidence" value="ECO:0007669"/>
    <property type="project" value="UniProtKB-SubCell"/>
</dbReference>
<dbReference type="GO" id="GO:0008137">
    <property type="term" value="F:NADH dehydrogenase (ubiquinone) activity"/>
    <property type="evidence" value="ECO:0007669"/>
    <property type="project" value="UniProtKB-EC"/>
</dbReference>
<dbReference type="GO" id="GO:0048039">
    <property type="term" value="F:ubiquinone binding"/>
    <property type="evidence" value="ECO:0007669"/>
    <property type="project" value="TreeGrafter"/>
</dbReference>
<dbReference type="GO" id="GO:0042773">
    <property type="term" value="P:ATP synthesis coupled electron transport"/>
    <property type="evidence" value="ECO:0007669"/>
    <property type="project" value="InterPro"/>
</dbReference>
<dbReference type="GO" id="GO:0015990">
    <property type="term" value="P:electron transport coupled proton transport"/>
    <property type="evidence" value="ECO:0007669"/>
    <property type="project" value="TreeGrafter"/>
</dbReference>
<dbReference type="InterPro" id="IPR003918">
    <property type="entry name" value="NADH_UbQ_OxRdtase"/>
</dbReference>
<dbReference type="InterPro" id="IPR001750">
    <property type="entry name" value="ND/Mrp_TM"/>
</dbReference>
<dbReference type="PANTHER" id="PTHR43507">
    <property type="entry name" value="NADH-UBIQUINONE OXIDOREDUCTASE CHAIN 4"/>
    <property type="match status" value="1"/>
</dbReference>
<dbReference type="PANTHER" id="PTHR43507:SF20">
    <property type="entry name" value="NADH-UBIQUINONE OXIDOREDUCTASE CHAIN 4"/>
    <property type="match status" value="1"/>
</dbReference>
<dbReference type="Pfam" id="PF00361">
    <property type="entry name" value="Proton_antipo_M"/>
    <property type="match status" value="1"/>
</dbReference>
<gene>
    <name type="primary">MT-ND4</name>
    <name type="synonym">MTND4</name>
    <name type="synonym">NADH4</name>
    <name type="synonym">ND4</name>
</gene>
<evidence type="ECO:0000250" key="1"/>
<evidence type="ECO:0000255" key="2"/>
<evidence type="ECO:0000305" key="3"/>
<accession>O03792</accession>
<geneLocation type="mitochondrion"/>
<comment type="function">
    <text evidence="1">Core subunit of the mitochondrial membrane respiratory chain NADH dehydrogenase (Complex I) that is believed to belong to the minimal assembly required for catalysis. Complex I functions in the transfer of electrons from NADH to the respiratory chain. The immediate electron acceptor for the enzyme is believed to be ubiquinone (By similarity).</text>
</comment>
<comment type="catalytic activity">
    <reaction>
        <text>a ubiquinone + NADH + 5 H(+)(in) = a ubiquinol + NAD(+) + 4 H(+)(out)</text>
        <dbReference type="Rhea" id="RHEA:29091"/>
        <dbReference type="Rhea" id="RHEA-COMP:9565"/>
        <dbReference type="Rhea" id="RHEA-COMP:9566"/>
        <dbReference type="ChEBI" id="CHEBI:15378"/>
        <dbReference type="ChEBI" id="CHEBI:16389"/>
        <dbReference type="ChEBI" id="CHEBI:17976"/>
        <dbReference type="ChEBI" id="CHEBI:57540"/>
        <dbReference type="ChEBI" id="CHEBI:57945"/>
        <dbReference type="EC" id="7.1.1.2"/>
    </reaction>
</comment>
<comment type="subcellular location">
    <subcellularLocation>
        <location evidence="1">Mitochondrion membrane</location>
        <topology evidence="1">Multi-pass membrane protein</topology>
    </subcellularLocation>
</comment>
<comment type="similarity">
    <text evidence="3">Belongs to the complex I subunit 4 family.</text>
</comment>
<proteinExistence type="inferred from homology"/>